<reference key="1">
    <citation type="journal article" date="2004" name="Nature">
        <title>The sequence and analysis of duplication-rich human chromosome 16.</title>
        <authorList>
            <person name="Martin J."/>
            <person name="Han C."/>
            <person name="Gordon L.A."/>
            <person name="Terry A."/>
            <person name="Prabhakar S."/>
            <person name="She X."/>
            <person name="Xie G."/>
            <person name="Hellsten U."/>
            <person name="Chan Y.M."/>
            <person name="Altherr M."/>
            <person name="Couronne O."/>
            <person name="Aerts A."/>
            <person name="Bajorek E."/>
            <person name="Black S."/>
            <person name="Blumer H."/>
            <person name="Branscomb E."/>
            <person name="Brown N.C."/>
            <person name="Bruno W.J."/>
            <person name="Buckingham J.M."/>
            <person name="Callen D.F."/>
            <person name="Campbell C.S."/>
            <person name="Campbell M.L."/>
            <person name="Campbell E.W."/>
            <person name="Caoile C."/>
            <person name="Challacombe J.F."/>
            <person name="Chasteen L.A."/>
            <person name="Chertkov O."/>
            <person name="Chi H.C."/>
            <person name="Christensen M."/>
            <person name="Clark L.M."/>
            <person name="Cohn J.D."/>
            <person name="Denys M."/>
            <person name="Detter J.C."/>
            <person name="Dickson M."/>
            <person name="Dimitrijevic-Bussod M."/>
            <person name="Escobar J."/>
            <person name="Fawcett J.J."/>
            <person name="Flowers D."/>
            <person name="Fotopulos D."/>
            <person name="Glavina T."/>
            <person name="Gomez M."/>
            <person name="Gonzales E."/>
            <person name="Goodstein D."/>
            <person name="Goodwin L.A."/>
            <person name="Grady D.L."/>
            <person name="Grigoriev I."/>
            <person name="Groza M."/>
            <person name="Hammon N."/>
            <person name="Hawkins T."/>
            <person name="Haydu L."/>
            <person name="Hildebrand C.E."/>
            <person name="Huang W."/>
            <person name="Israni S."/>
            <person name="Jett J."/>
            <person name="Jewett P.B."/>
            <person name="Kadner K."/>
            <person name="Kimball H."/>
            <person name="Kobayashi A."/>
            <person name="Krawczyk M.-C."/>
            <person name="Leyba T."/>
            <person name="Longmire J.L."/>
            <person name="Lopez F."/>
            <person name="Lou Y."/>
            <person name="Lowry S."/>
            <person name="Ludeman T."/>
            <person name="Manohar C.F."/>
            <person name="Mark G.A."/>
            <person name="McMurray K.L."/>
            <person name="Meincke L.J."/>
            <person name="Morgan J."/>
            <person name="Moyzis R.K."/>
            <person name="Mundt M.O."/>
            <person name="Munk A.C."/>
            <person name="Nandkeshwar R.D."/>
            <person name="Pitluck S."/>
            <person name="Pollard M."/>
            <person name="Predki P."/>
            <person name="Parson-Quintana B."/>
            <person name="Ramirez L."/>
            <person name="Rash S."/>
            <person name="Retterer J."/>
            <person name="Ricke D.O."/>
            <person name="Robinson D.L."/>
            <person name="Rodriguez A."/>
            <person name="Salamov A."/>
            <person name="Saunders E.H."/>
            <person name="Scott D."/>
            <person name="Shough T."/>
            <person name="Stallings R.L."/>
            <person name="Stalvey M."/>
            <person name="Sutherland R.D."/>
            <person name="Tapia R."/>
            <person name="Tesmer J.G."/>
            <person name="Thayer N."/>
            <person name="Thompson L.S."/>
            <person name="Tice H."/>
            <person name="Torney D.C."/>
            <person name="Tran-Gyamfi M."/>
            <person name="Tsai M."/>
            <person name="Ulanovsky L.E."/>
            <person name="Ustaszewska A."/>
            <person name="Vo N."/>
            <person name="White P.S."/>
            <person name="Williams A.L."/>
            <person name="Wills P.L."/>
            <person name="Wu J.-R."/>
            <person name="Wu K."/>
            <person name="Yang J."/>
            <person name="DeJong P."/>
            <person name="Bruce D."/>
            <person name="Doggett N.A."/>
            <person name="Deaven L."/>
            <person name="Schmutz J."/>
            <person name="Grimwood J."/>
            <person name="Richardson P."/>
            <person name="Rokhsar D.S."/>
            <person name="Eichler E.E."/>
            <person name="Gilna P."/>
            <person name="Lucas S.M."/>
            <person name="Myers R.M."/>
            <person name="Rubin E.M."/>
            <person name="Pennacchio L.A."/>
        </authorList>
    </citation>
    <scope>NUCLEOTIDE SEQUENCE [LARGE SCALE GENOMIC DNA]</scope>
</reference>
<comment type="similarity">
    <text evidence="1">Belongs to the cyclin family. Cyclin Y subfamily.</text>
</comment>
<gene>
    <name type="primary">CCNYL3</name>
</gene>
<proteinExistence type="inferred from homology"/>
<dbReference type="EMBL" id="AC092133">
    <property type="status" value="NOT_ANNOTATED_CDS"/>
    <property type="molecule type" value="Genomic_DNA"/>
</dbReference>
<dbReference type="EMBL" id="AC135776">
    <property type="status" value="NOT_ANNOTATED_CDS"/>
    <property type="molecule type" value="Genomic_DNA"/>
</dbReference>
<dbReference type="SMR" id="P0C7X3"/>
<dbReference type="FunCoup" id="P0C7X3">
    <property type="interactions" value="5"/>
</dbReference>
<dbReference type="BioMuta" id="HGNC:33206"/>
<dbReference type="DMDM" id="206557855"/>
<dbReference type="PeptideAtlas" id="P0C7X3"/>
<dbReference type="AGR" id="HGNC:33206"/>
<dbReference type="GeneCards" id="CCNYL3"/>
<dbReference type="HGNC" id="HGNC:33206">
    <property type="gene designation" value="CCNYL3"/>
</dbReference>
<dbReference type="neXtProt" id="NX_P0C7X3"/>
<dbReference type="InParanoid" id="P0C7X3"/>
<dbReference type="PAN-GO" id="P0C7X3">
    <property type="GO annotations" value="4 GO annotations based on evolutionary models"/>
</dbReference>
<dbReference type="PhylomeDB" id="P0C7X3"/>
<dbReference type="ChiTaRS" id="CCNYL3">
    <property type="organism name" value="human"/>
</dbReference>
<dbReference type="Pharos" id="P0C7X3">
    <property type="development level" value="Tdark"/>
</dbReference>
<dbReference type="PRO" id="PR:P0C7X3"/>
<dbReference type="Proteomes" id="UP000005640">
    <property type="component" value="Unplaced"/>
</dbReference>
<dbReference type="RNAct" id="P0C7X3">
    <property type="molecule type" value="protein"/>
</dbReference>
<dbReference type="GO" id="GO:0005886">
    <property type="term" value="C:plasma membrane"/>
    <property type="evidence" value="ECO:0000318"/>
    <property type="project" value="GO_Central"/>
</dbReference>
<dbReference type="GO" id="GO:0060828">
    <property type="term" value="P:regulation of canonical Wnt signaling pathway"/>
    <property type="evidence" value="ECO:0000318"/>
    <property type="project" value="GO_Central"/>
</dbReference>
<dbReference type="CDD" id="cd20540">
    <property type="entry name" value="CYCLIN_CCNY_like"/>
    <property type="match status" value="1"/>
</dbReference>
<dbReference type="Gene3D" id="1.10.472.10">
    <property type="entry name" value="Cyclin-like"/>
    <property type="match status" value="1"/>
</dbReference>
<dbReference type="InterPro" id="IPR036915">
    <property type="entry name" value="Cyclin-like_sf"/>
</dbReference>
<dbReference type="InterPro" id="IPR006671">
    <property type="entry name" value="Cyclin_N"/>
</dbReference>
<dbReference type="PANTHER" id="PTHR14248">
    <property type="entry name" value="CYCLIN Y, ISOFORM A"/>
    <property type="match status" value="1"/>
</dbReference>
<dbReference type="Pfam" id="PF00134">
    <property type="entry name" value="Cyclin_N"/>
    <property type="match status" value="1"/>
</dbReference>
<dbReference type="SUPFAM" id="SSF47954">
    <property type="entry name" value="Cyclin-like"/>
    <property type="match status" value="1"/>
</dbReference>
<organism>
    <name type="scientific">Homo sapiens</name>
    <name type="common">Human</name>
    <dbReference type="NCBI Taxonomy" id="9606"/>
    <lineage>
        <taxon>Eukaryota</taxon>
        <taxon>Metazoa</taxon>
        <taxon>Chordata</taxon>
        <taxon>Craniata</taxon>
        <taxon>Vertebrata</taxon>
        <taxon>Euteleostomi</taxon>
        <taxon>Mammalia</taxon>
        <taxon>Eutheria</taxon>
        <taxon>Euarchontoglires</taxon>
        <taxon>Primates</taxon>
        <taxon>Haplorrhini</taxon>
        <taxon>Catarrhini</taxon>
        <taxon>Hominidae</taxon>
        <taxon>Homo</taxon>
    </lineage>
</organism>
<protein>
    <recommendedName>
        <fullName>Putative cyclin-Y-like protein 3</fullName>
    </recommendedName>
</protein>
<accession>P0C7X3</accession>
<accession>B5MCU7</accession>
<evidence type="ECO:0000305" key="1"/>
<name>CCYL3_HUMAN</name>
<sequence length="344" mass="39078">MACAVFQIPPWHLDRKYGSCSTILLDNSTASQPDLRHTLERYANRSLAIFEEPVHPLPQEKLPGKSFKHDPKRNCIFRHFCTLFQVIKLTAPCAIVALVYIKRLLTSANIDLCPTNWKKIVLGTMLLASKVWRNHGLWSVDDSQNSKDTAVENMSKMEKCFLELLEFNIHVSASVYAKYYFDLCALANDHDLYFLFSFLHKDKAQKLEGHTSQHSLSLGPCRVGMENYATYSPLSSQPVLGALSLAEVLPQEIKQEIHQVLMDHGVPCHYTCFLLHPEDSTLERFLVLHSIQGLQEDSVLCKVEIHGLSPQPQTYQSHFRSPSLAELLNRISGTCRNHFAGMQK</sequence>
<feature type="chain" id="PRO_0000344974" description="Putative cyclin-Y-like protein 3">
    <location>
        <begin position="1"/>
        <end position="344"/>
    </location>
</feature>
<feature type="domain" description="Cyclin N-terminal">
    <location>
        <begin position="40"/>
        <end position="170"/>
    </location>
</feature>
<keyword id="KW-0195">Cyclin</keyword>
<keyword id="KW-1185">Reference proteome</keyword>